<evidence type="ECO:0000250" key="1"/>
<evidence type="ECO:0000269" key="2">
    <source>
    </source>
</evidence>
<evidence type="ECO:0000305" key="3"/>
<evidence type="ECO:0000305" key="4">
    <source>
    </source>
</evidence>
<gene>
    <name type="ordered locus">all3922</name>
</gene>
<organism>
    <name type="scientific">Nostoc sp. (strain PCC 7120 / SAG 25.82 / UTEX 2576)</name>
    <dbReference type="NCBI Taxonomy" id="103690"/>
    <lineage>
        <taxon>Bacteria</taxon>
        <taxon>Bacillati</taxon>
        <taxon>Cyanobacteriota</taxon>
        <taxon>Cyanophyceae</taxon>
        <taxon>Nostocales</taxon>
        <taxon>Nostocaceae</taxon>
        <taxon>Nostoc</taxon>
    </lineage>
</organism>
<sequence>MKSQVQPKLIIHGGAGSSLHGKGGLEAVRQTLHAVVEEVYALLLSGVNASVAVVRGCQLLEDEPRFNAGTGSVLQSDGQIRMSASIMDGALGRFSGVINVSRVKNPIELAQFLQNSPDRVLSDYGSAELAREMQIPSYNALTELRLQEWIQERQDNFKRTMAGVIAEPELLETSNAGRGTIGVVALDTYGKLAVGTSTGGKGFERIGRVSDSAMPAGNYATSYAAVSCTGIGEDIIDECLAPKIVIRVTDGLSLQDSMQRSFAEAHDNKRDFGAIALDANGAIAWGKTCDIILAAFHDGEKIGDTLELAVGTQVGSIS</sequence>
<comment type="function">
    <text evidence="2">Degrades proteins damaged by L-isoaspartyl residue formation (also known as beta-Asp residues). Probably performs the final step in the degradation of the reserve polymer cyanophycin (depolymerizes the building block L-beta-Asp-Arg). Also has L-asparaginase activity.</text>
</comment>
<comment type="catalytic activity">
    <reaction>
        <text>Cleavage of a beta-linked Asp residue from the N-terminus of a polypeptide.</text>
        <dbReference type="EC" id="3.4.19.5"/>
    </reaction>
</comment>
<comment type="biophysicochemical properties">
    <kinetics>
        <KM>2 mM for L-Asn</KM>
        <KM>1.54 mM for L-beta-Asp-Ala</KM>
        <KM>0.27 mM for L-beta-Asp-Arg</KM>
        <KM>0.52 mM for L-beta-Asp-Gly</KM>
        <KM>0.26 mM for L-beta-Asp-Leu</KM>
        <KM>0.53 mM for L-beta-Asp-Lys</KM>
        <KM>0.68 mM for L-beta-Asp-Phe</KM>
        <Vmax>2.2 umol/min/mg enzyme with L-Asn as substrate</Vmax>
        <Vmax>12.3 umol/min/mg enzyme with L-beta-Asp-Ala as substrate</Vmax>
        <Vmax>5.7 umol/min/mg enzyme with L-beta-Asp-Arg as substrate</Vmax>
        <Vmax>2.7 umol/min/mg enzyme with L-beta-Asp-Gly as substrate</Vmax>
        <Vmax>4.5 umol/min/mg enzyme with L-beta-Asp-Leu as substrate</Vmax>
        <Vmax>22.2 umol/min/mg enzyme with L-beta-Asp-Lys as substrate</Vmax>
        <Vmax>20.1 umol/min/mg enzyme with L-beta-Asp-Phe as substrate</Vmax>
        <text>Enzyme is inactive on alpha-aspartyl dipeptides.</text>
    </kinetics>
</comment>
<comment type="subunit">
    <text evidence="4">Heterotetramer of two alpha and two beta chains arranged as a dimer of alpha/beta heterodimers.</text>
</comment>
<comment type="PTM">
    <text>Cleaved into an alpha and beta chain by autocatalysis; this activates the enzyme. The N-terminal residue of the beta subunit is responsible for the nucleophile hydrolase activity.</text>
</comment>
<comment type="similarity">
    <text evidence="3">Belongs to the Ntn-hydrolase family.</text>
</comment>
<keyword id="KW-0068">Autocatalytic cleavage</keyword>
<keyword id="KW-0903">Direct protein sequencing</keyword>
<keyword id="KW-0378">Hydrolase</keyword>
<keyword id="KW-0645">Protease</keyword>
<keyword id="KW-1185">Reference proteome</keyword>
<feature type="chain" id="PRO_0000344063" description="Isoaspartyl peptidase/L-asparaginase subunit alpha">
    <location>
        <begin position="1"/>
        <end position="179"/>
    </location>
</feature>
<feature type="chain" id="PRO_0000344064" description="Isoaspartyl peptidase/L-asparaginase subunit beta">
    <location>
        <begin position="180"/>
        <end position="318"/>
    </location>
</feature>
<feature type="active site" description="Nucleophile" evidence="1">
    <location>
        <position position="180"/>
    </location>
</feature>
<feature type="binding site" evidence="1">
    <location>
        <begin position="208"/>
        <end position="211"/>
    </location>
    <ligand>
        <name>substrate</name>
    </ligand>
</feature>
<feature type="binding site" evidence="1">
    <location>
        <begin position="229"/>
        <end position="232"/>
    </location>
    <ligand>
        <name>substrate</name>
    </ligand>
</feature>
<feature type="site" description="Cleavage; by autolysis">
    <location>
        <begin position="179"/>
        <end position="180"/>
    </location>
</feature>
<protein>
    <recommendedName>
        <fullName>Isoaspartyl peptidase/L-asparaginase</fullName>
        <ecNumber>3.4.19.5</ecNumber>
    </recommendedName>
    <alternativeName>
        <fullName>Beta-aspartyl-peptidase</fullName>
    </alternativeName>
    <alternativeName>
        <fullName>Isoaspartyl dipeptidase</fullName>
    </alternativeName>
    <component>
        <recommendedName>
            <fullName>Isoaspartyl peptidase/L-asparaginase subunit alpha</fullName>
        </recommendedName>
    </component>
    <component>
        <recommendedName>
            <fullName>Isoaspartyl peptidase/L-asparaginase subunit beta</fullName>
        </recommendedName>
    </component>
</protein>
<accession>Q8YQB1</accession>
<dbReference type="EC" id="3.4.19.5"/>
<dbReference type="EMBL" id="BA000019">
    <property type="protein sequence ID" value="BAB75621.1"/>
    <property type="molecule type" value="Genomic_DNA"/>
</dbReference>
<dbReference type="PIR" id="AC2296">
    <property type="entry name" value="AC2296"/>
</dbReference>
<dbReference type="RefSeq" id="WP_010998063.1">
    <property type="nucleotide sequence ID" value="NZ_RSCN01000043.1"/>
</dbReference>
<dbReference type="SMR" id="Q8YQB1"/>
<dbReference type="STRING" id="103690.gene:10495964"/>
<dbReference type="MEROPS" id="T02.002"/>
<dbReference type="KEGG" id="ana:all3922"/>
<dbReference type="eggNOG" id="COG1446">
    <property type="taxonomic scope" value="Bacteria"/>
</dbReference>
<dbReference type="OrthoDB" id="9780217at2"/>
<dbReference type="BioCyc" id="MetaCyc:MONOMER-21306"/>
<dbReference type="SABIO-RK" id="Q8YQB1"/>
<dbReference type="Proteomes" id="UP000002483">
    <property type="component" value="Chromosome"/>
</dbReference>
<dbReference type="GO" id="GO:0008798">
    <property type="term" value="F:beta-aspartyl-peptidase activity"/>
    <property type="evidence" value="ECO:0007669"/>
    <property type="project" value="UniProtKB-EC"/>
</dbReference>
<dbReference type="GO" id="GO:0016811">
    <property type="term" value="F:hydrolase activity, acting on carbon-nitrogen (but not peptide) bonds, in linear amides"/>
    <property type="evidence" value="ECO:0007669"/>
    <property type="project" value="UniProtKB-ARBA"/>
</dbReference>
<dbReference type="GO" id="GO:0006508">
    <property type="term" value="P:proteolysis"/>
    <property type="evidence" value="ECO:0007669"/>
    <property type="project" value="UniProtKB-KW"/>
</dbReference>
<dbReference type="CDD" id="cd14949">
    <property type="entry name" value="Asparaginase_2_like_3"/>
    <property type="match status" value="1"/>
</dbReference>
<dbReference type="Gene3D" id="3.60.20.30">
    <property type="entry name" value="(Glycosyl)asparaginase"/>
    <property type="match status" value="1"/>
</dbReference>
<dbReference type="InterPro" id="IPR029055">
    <property type="entry name" value="Ntn_hydrolases_N"/>
</dbReference>
<dbReference type="InterPro" id="IPR000246">
    <property type="entry name" value="Peptidase_T2"/>
</dbReference>
<dbReference type="PANTHER" id="PTHR10188">
    <property type="entry name" value="L-ASPARAGINASE"/>
    <property type="match status" value="1"/>
</dbReference>
<dbReference type="PANTHER" id="PTHR10188:SF6">
    <property type="entry name" value="N(4)-(BETA-N-ACETYLGLUCOSAMINYL)-L-ASPARAGINASE"/>
    <property type="match status" value="1"/>
</dbReference>
<dbReference type="Pfam" id="PF01112">
    <property type="entry name" value="Asparaginase_2"/>
    <property type="match status" value="1"/>
</dbReference>
<dbReference type="SUPFAM" id="SSF56235">
    <property type="entry name" value="N-terminal nucleophile aminohydrolases (Ntn hydrolases)"/>
    <property type="match status" value="1"/>
</dbReference>
<proteinExistence type="evidence at protein level"/>
<name>ASGX_NOSS1</name>
<reference key="1">
    <citation type="journal article" date="2001" name="DNA Res.">
        <title>Complete genomic sequence of the filamentous nitrogen-fixing cyanobacterium Anabaena sp. strain PCC 7120.</title>
        <authorList>
            <person name="Kaneko T."/>
            <person name="Nakamura Y."/>
            <person name="Wolk C.P."/>
            <person name="Kuritz T."/>
            <person name="Sasamoto S."/>
            <person name="Watanabe A."/>
            <person name="Iriguchi M."/>
            <person name="Ishikawa A."/>
            <person name="Kawashima K."/>
            <person name="Kimura T."/>
            <person name="Kishida Y."/>
            <person name="Kohara M."/>
            <person name="Matsumoto M."/>
            <person name="Matsuno A."/>
            <person name="Muraki A."/>
            <person name="Nakazaki N."/>
            <person name="Shimpo S."/>
            <person name="Sugimoto M."/>
            <person name="Takazawa M."/>
            <person name="Yamada M."/>
            <person name="Yasuda M."/>
            <person name="Tabata S."/>
        </authorList>
    </citation>
    <scope>NUCLEOTIDE SEQUENCE [LARGE SCALE GENOMIC DNA]</scope>
    <source>
        <strain>PCC 7120 / SAG 25.82 / UTEX 2576</strain>
    </source>
</reference>
<reference key="2">
    <citation type="journal article" date="2002" name="Biochem. J.">
        <title>Isoaspartyl dipeptidase activity of plant-type asparaginases.</title>
        <authorList>
            <person name="Hejazi M."/>
            <person name="Piotukh K."/>
            <person name="Mattow J."/>
            <person name="Deutzmann R."/>
            <person name="Volkmer-Engert R."/>
            <person name="Lockau W."/>
        </authorList>
    </citation>
    <scope>PROTEIN SEQUENCE OF 180-185</scope>
    <scope>FUNCTION</scope>
    <scope>SUBUNIT</scope>
    <scope>AUTOCATALYTIC CLEAVAGE</scope>
</reference>